<proteinExistence type="inferred from homology"/>
<feature type="chain" id="PRO_1000067882" description="Large ribosomal subunit protein bL21">
    <location>
        <begin position="1"/>
        <end position="103"/>
    </location>
</feature>
<protein>
    <recommendedName>
        <fullName evidence="1">Large ribosomal subunit protein bL21</fullName>
    </recommendedName>
    <alternativeName>
        <fullName evidence="2">50S ribosomal protein L21</fullName>
    </alternativeName>
</protein>
<accession>Q0K6P4</accession>
<gene>
    <name evidence="1" type="primary">rplU</name>
    <name type="ordered locus">H16_A3252</name>
</gene>
<evidence type="ECO:0000255" key="1">
    <source>
        <dbReference type="HAMAP-Rule" id="MF_01363"/>
    </source>
</evidence>
<evidence type="ECO:0000305" key="2"/>
<keyword id="KW-1185">Reference proteome</keyword>
<keyword id="KW-0687">Ribonucleoprotein</keyword>
<keyword id="KW-0689">Ribosomal protein</keyword>
<keyword id="KW-0694">RNA-binding</keyword>
<keyword id="KW-0699">rRNA-binding</keyword>
<organism>
    <name type="scientific">Cupriavidus necator (strain ATCC 17699 / DSM 428 / KCTC 22496 / NCIMB 10442 / H16 / Stanier 337)</name>
    <name type="common">Ralstonia eutropha</name>
    <dbReference type="NCBI Taxonomy" id="381666"/>
    <lineage>
        <taxon>Bacteria</taxon>
        <taxon>Pseudomonadati</taxon>
        <taxon>Pseudomonadota</taxon>
        <taxon>Betaproteobacteria</taxon>
        <taxon>Burkholderiales</taxon>
        <taxon>Burkholderiaceae</taxon>
        <taxon>Cupriavidus</taxon>
    </lineage>
</organism>
<comment type="function">
    <text evidence="1">This protein binds to 23S rRNA in the presence of protein L20.</text>
</comment>
<comment type="subunit">
    <text evidence="1">Part of the 50S ribosomal subunit. Contacts protein L20.</text>
</comment>
<comment type="similarity">
    <text evidence="1">Belongs to the bacterial ribosomal protein bL21 family.</text>
</comment>
<dbReference type="EMBL" id="AM260479">
    <property type="protein sequence ID" value="CAJ94327.1"/>
    <property type="molecule type" value="Genomic_DNA"/>
</dbReference>
<dbReference type="RefSeq" id="WP_006576525.1">
    <property type="nucleotide sequence ID" value="NZ_CP039287.1"/>
</dbReference>
<dbReference type="SMR" id="Q0K6P4"/>
<dbReference type="STRING" id="381666.H16_A3252"/>
<dbReference type="GeneID" id="70691269"/>
<dbReference type="KEGG" id="reh:H16_A3252"/>
<dbReference type="eggNOG" id="COG0261">
    <property type="taxonomic scope" value="Bacteria"/>
</dbReference>
<dbReference type="HOGENOM" id="CLU_061463_3_2_4"/>
<dbReference type="OrthoDB" id="9813334at2"/>
<dbReference type="Proteomes" id="UP000008210">
    <property type="component" value="Chromosome 1"/>
</dbReference>
<dbReference type="GO" id="GO:0005737">
    <property type="term" value="C:cytoplasm"/>
    <property type="evidence" value="ECO:0007669"/>
    <property type="project" value="UniProtKB-ARBA"/>
</dbReference>
<dbReference type="GO" id="GO:1990904">
    <property type="term" value="C:ribonucleoprotein complex"/>
    <property type="evidence" value="ECO:0007669"/>
    <property type="project" value="UniProtKB-KW"/>
</dbReference>
<dbReference type="GO" id="GO:0005840">
    <property type="term" value="C:ribosome"/>
    <property type="evidence" value="ECO:0007669"/>
    <property type="project" value="UniProtKB-KW"/>
</dbReference>
<dbReference type="GO" id="GO:0019843">
    <property type="term" value="F:rRNA binding"/>
    <property type="evidence" value="ECO:0007669"/>
    <property type="project" value="UniProtKB-UniRule"/>
</dbReference>
<dbReference type="GO" id="GO:0003735">
    <property type="term" value="F:structural constituent of ribosome"/>
    <property type="evidence" value="ECO:0007669"/>
    <property type="project" value="InterPro"/>
</dbReference>
<dbReference type="GO" id="GO:0006412">
    <property type="term" value="P:translation"/>
    <property type="evidence" value="ECO:0007669"/>
    <property type="project" value="UniProtKB-UniRule"/>
</dbReference>
<dbReference type="HAMAP" id="MF_01363">
    <property type="entry name" value="Ribosomal_bL21"/>
    <property type="match status" value="1"/>
</dbReference>
<dbReference type="InterPro" id="IPR028909">
    <property type="entry name" value="bL21-like"/>
</dbReference>
<dbReference type="InterPro" id="IPR036164">
    <property type="entry name" value="bL21-like_sf"/>
</dbReference>
<dbReference type="InterPro" id="IPR001787">
    <property type="entry name" value="Ribosomal_bL21"/>
</dbReference>
<dbReference type="InterPro" id="IPR018258">
    <property type="entry name" value="Ribosomal_bL21_CS"/>
</dbReference>
<dbReference type="NCBIfam" id="TIGR00061">
    <property type="entry name" value="L21"/>
    <property type="match status" value="1"/>
</dbReference>
<dbReference type="PANTHER" id="PTHR21349">
    <property type="entry name" value="50S RIBOSOMAL PROTEIN L21"/>
    <property type="match status" value="1"/>
</dbReference>
<dbReference type="PANTHER" id="PTHR21349:SF0">
    <property type="entry name" value="LARGE RIBOSOMAL SUBUNIT PROTEIN BL21M"/>
    <property type="match status" value="1"/>
</dbReference>
<dbReference type="Pfam" id="PF00829">
    <property type="entry name" value="Ribosomal_L21p"/>
    <property type="match status" value="1"/>
</dbReference>
<dbReference type="SUPFAM" id="SSF141091">
    <property type="entry name" value="L21p-like"/>
    <property type="match status" value="1"/>
</dbReference>
<dbReference type="PROSITE" id="PS01169">
    <property type="entry name" value="RIBOSOMAL_L21"/>
    <property type="match status" value="1"/>
</dbReference>
<name>RL21_CUPNH</name>
<sequence length="103" mass="11390">MYAVVKTGGKQYKVAAGEKLKVEQIPADIGAEITLDQVLAVGAGDQIKFGTPLVSGASVKATVISQGRHDKVKIFKMRRRKHYQKRQGHRQNYTELRIEAIVA</sequence>
<reference key="1">
    <citation type="journal article" date="2006" name="Nat. Biotechnol.">
        <title>Genome sequence of the bioplastic-producing 'Knallgas' bacterium Ralstonia eutropha H16.</title>
        <authorList>
            <person name="Pohlmann A."/>
            <person name="Fricke W.F."/>
            <person name="Reinecke F."/>
            <person name="Kusian B."/>
            <person name="Liesegang H."/>
            <person name="Cramm R."/>
            <person name="Eitinger T."/>
            <person name="Ewering C."/>
            <person name="Poetter M."/>
            <person name="Schwartz E."/>
            <person name="Strittmatter A."/>
            <person name="Voss I."/>
            <person name="Gottschalk G."/>
            <person name="Steinbuechel A."/>
            <person name="Friedrich B."/>
            <person name="Bowien B."/>
        </authorList>
    </citation>
    <scope>NUCLEOTIDE SEQUENCE [LARGE SCALE GENOMIC DNA]</scope>
    <source>
        <strain>ATCC 17699 / DSM 428 / KCTC 22496 / NCIMB 10442 / H16 / Stanier 337</strain>
    </source>
</reference>